<protein>
    <recommendedName>
        <fullName>Uncharacterized protein MT1741Mb1728c</fullName>
    </recommendedName>
</protein>
<gene>
    <name type="ordered locus">MT1741</name>
</gene>
<organism>
    <name type="scientific">Mycobacterium tuberculosis (strain CDC 1551 / Oshkosh)</name>
    <dbReference type="NCBI Taxonomy" id="83331"/>
    <lineage>
        <taxon>Bacteria</taxon>
        <taxon>Bacillati</taxon>
        <taxon>Actinomycetota</taxon>
        <taxon>Actinomycetes</taxon>
        <taxon>Mycobacteriales</taxon>
        <taxon>Mycobacteriaceae</taxon>
        <taxon>Mycobacterium</taxon>
        <taxon>Mycobacterium tuberculosis complex</taxon>
    </lineage>
</organism>
<dbReference type="EMBL" id="AE000516">
    <property type="protein sequence ID" value="AAK46010.1"/>
    <property type="molecule type" value="Genomic_DNA"/>
</dbReference>
<dbReference type="PIR" id="E70503">
    <property type="entry name" value="E70503"/>
</dbReference>
<dbReference type="RefSeq" id="WP_003898977.1">
    <property type="nucleotide sequence ID" value="NZ_KK341227.1"/>
</dbReference>
<dbReference type="KEGG" id="mtc:MT1741"/>
<dbReference type="PATRIC" id="fig|83331.31.peg.1869"/>
<dbReference type="HOGENOM" id="CLU_022065_0_0_11"/>
<dbReference type="Proteomes" id="UP000001020">
    <property type="component" value="Chromosome"/>
</dbReference>
<dbReference type="CDD" id="cd00085">
    <property type="entry name" value="HNHc"/>
    <property type="match status" value="1"/>
</dbReference>
<dbReference type="InterPro" id="IPR003870">
    <property type="entry name" value="DUF222"/>
</dbReference>
<dbReference type="InterPro" id="IPR003615">
    <property type="entry name" value="HNH_nuc"/>
</dbReference>
<dbReference type="Pfam" id="PF02720">
    <property type="entry name" value="DUF222"/>
    <property type="match status" value="1"/>
</dbReference>
<dbReference type="SMART" id="SM00507">
    <property type="entry name" value="HNHc"/>
    <property type="match status" value="1"/>
</dbReference>
<accession>P9WLT2</accession>
<accession>L0T7N7</accession>
<accession>O33201</accession>
<accession>P64885</accession>
<proteinExistence type="inferred from homology"/>
<feature type="chain" id="PRO_0000427424" description="Uncharacterized protein MT1741Mb1728c">
    <location>
        <begin position="1"/>
        <end position="454"/>
    </location>
</feature>
<feature type="region of interest" description="Disordered" evidence="1">
    <location>
        <begin position="422"/>
        <end position="454"/>
    </location>
</feature>
<evidence type="ECO:0000256" key="1">
    <source>
        <dbReference type="SAM" id="MobiDB-lite"/>
    </source>
</evidence>
<evidence type="ECO:0000305" key="2"/>
<keyword id="KW-1185">Reference proteome</keyword>
<name>Y1702_MYCTO</name>
<reference key="1">
    <citation type="journal article" date="2002" name="J. Bacteriol.">
        <title>Whole-genome comparison of Mycobacterium tuberculosis clinical and laboratory strains.</title>
        <authorList>
            <person name="Fleischmann R.D."/>
            <person name="Alland D."/>
            <person name="Eisen J.A."/>
            <person name="Carpenter L."/>
            <person name="White O."/>
            <person name="Peterson J.D."/>
            <person name="DeBoy R.T."/>
            <person name="Dodson R.J."/>
            <person name="Gwinn M.L."/>
            <person name="Haft D.H."/>
            <person name="Hickey E.K."/>
            <person name="Kolonay J.F."/>
            <person name="Nelson W.C."/>
            <person name="Umayam L.A."/>
            <person name="Ermolaeva M.D."/>
            <person name="Salzberg S.L."/>
            <person name="Delcher A."/>
            <person name="Utterback T.R."/>
            <person name="Weidman J.F."/>
            <person name="Khouri H.M."/>
            <person name="Gill J."/>
            <person name="Mikula A."/>
            <person name="Bishai W."/>
            <person name="Jacobs W.R. Jr."/>
            <person name="Venter J.C."/>
            <person name="Fraser C.M."/>
        </authorList>
    </citation>
    <scope>NUCLEOTIDE SEQUENCE [LARGE SCALE GENOMIC DNA]</scope>
    <source>
        <strain>CDC 1551 / Oshkosh</strain>
    </source>
</reference>
<comment type="similarity">
    <text evidence="2">Belongs to the Rv1128c/1148c/1588c/1702c/1945/3466 family.</text>
</comment>
<sequence length="454" mass="49396">MYSSSREEAVAAFDNLDTALNRVLKVSPDDLTIPECLAMLQRCEKIRRRLPAAEHPFINKLADQTDQTELGGKLPFALAERLHISRGEASRRIHEAADLGPRRTLTGQPLPPLLTATAAAQRAGHLGPAHVQVIRCFLHQLPHHVDLPTREKAEAELATLGGRFRPDQLHKLATKLADCLNPDGNYNDTDRARRRSIILGNQGPDGMSAISGYLTPEARATVDAVLAKLAAPGMANPADDTPCLAGTPSQAAIEADTRSAGQRHHDGLLAALRALLCSGELGQHNGLPAAIIVSTSLTELQSRAGHALTGGGTLLPMSDVIRLASHANHYLRIFDHGRELALYHTKRLASPGQRIVLYAKDRGCSFPNCDVPGYLTEVHHVTDFAQCQETDINELTQGCGPHHQLATTGGWITRKRKDGTTEWLPPAHLDHGQPRTNSYFHPEKLLHDSDEDDP</sequence>